<evidence type="ECO:0000255" key="1">
    <source>
        <dbReference type="HAMAP-Rule" id="MF_00359"/>
    </source>
</evidence>
<evidence type="ECO:0000305" key="2"/>
<protein>
    <recommendedName>
        <fullName evidence="1">Small ribosomal subunit protein eS1</fullName>
    </recommendedName>
    <alternativeName>
        <fullName evidence="2">30S ribosomal protein S3Ae</fullName>
    </alternativeName>
    <alternativeName>
        <fullName evidence="1">Ribosomal protein S1e</fullName>
    </alternativeName>
</protein>
<organism>
    <name type="scientific">Sulfurisphaera tokodaii (strain DSM 16993 / JCM 10545 / NBRC 100140 / 7)</name>
    <name type="common">Sulfolobus tokodaii</name>
    <dbReference type="NCBI Taxonomy" id="273063"/>
    <lineage>
        <taxon>Archaea</taxon>
        <taxon>Thermoproteota</taxon>
        <taxon>Thermoprotei</taxon>
        <taxon>Sulfolobales</taxon>
        <taxon>Sulfolobaceae</taxon>
        <taxon>Sulfurisphaera</taxon>
    </lineage>
</organism>
<sequence length="193" mass="22180">MSSKTAIKDKWKLKKWFTIVAPKTFGEVVLGTTPAFDANQALNRKVETTLYDLTGDYSLVYVHLYFRVIGVEGDRLLTRFAGHELSRDYIRSLVRRKSSKIDAITDVTTKDGYVLRVKGLALTTYRAHRSQKTEIRKIIWNILSTRASETTFDEFVQDIVFGKLSNDIFQQAKKIYPLRKVEVEKTKLLKAPA</sequence>
<dbReference type="EMBL" id="BA000023">
    <property type="protein sequence ID" value="BAB65443.1"/>
    <property type="molecule type" value="Genomic_DNA"/>
</dbReference>
<dbReference type="RefSeq" id="WP_010978426.1">
    <property type="nucleotide sequence ID" value="NC_003106.2"/>
</dbReference>
<dbReference type="SMR" id="Q975F8"/>
<dbReference type="STRING" id="273063.STK_04530"/>
<dbReference type="KEGG" id="sto:STK_04530"/>
<dbReference type="PATRIC" id="fig|273063.9.peg.525"/>
<dbReference type="eggNOG" id="arCOG04186">
    <property type="taxonomic scope" value="Archaea"/>
</dbReference>
<dbReference type="OrthoDB" id="30639at2157"/>
<dbReference type="Proteomes" id="UP000001015">
    <property type="component" value="Chromosome"/>
</dbReference>
<dbReference type="GO" id="GO:1990904">
    <property type="term" value="C:ribonucleoprotein complex"/>
    <property type="evidence" value="ECO:0007669"/>
    <property type="project" value="UniProtKB-KW"/>
</dbReference>
<dbReference type="GO" id="GO:0005840">
    <property type="term" value="C:ribosome"/>
    <property type="evidence" value="ECO:0007669"/>
    <property type="project" value="UniProtKB-KW"/>
</dbReference>
<dbReference type="GO" id="GO:0003735">
    <property type="term" value="F:structural constituent of ribosome"/>
    <property type="evidence" value="ECO:0007669"/>
    <property type="project" value="InterPro"/>
</dbReference>
<dbReference type="GO" id="GO:0006412">
    <property type="term" value="P:translation"/>
    <property type="evidence" value="ECO:0007669"/>
    <property type="project" value="UniProtKB-UniRule"/>
</dbReference>
<dbReference type="HAMAP" id="MF_00359">
    <property type="entry name" value="Ribosomal_eS1"/>
    <property type="match status" value="1"/>
</dbReference>
<dbReference type="InterPro" id="IPR001593">
    <property type="entry name" value="Ribosomal_eS1"/>
</dbReference>
<dbReference type="InterPro" id="IPR030838">
    <property type="entry name" value="Ribosomal_eS1_arc"/>
</dbReference>
<dbReference type="NCBIfam" id="NF003142">
    <property type="entry name" value="PRK04057.1"/>
    <property type="match status" value="1"/>
</dbReference>
<dbReference type="PANTHER" id="PTHR11830">
    <property type="entry name" value="40S RIBOSOMAL PROTEIN S3A"/>
    <property type="match status" value="1"/>
</dbReference>
<dbReference type="Pfam" id="PF01015">
    <property type="entry name" value="Ribosomal_S3Ae"/>
    <property type="match status" value="1"/>
</dbReference>
<dbReference type="SMART" id="SM01397">
    <property type="entry name" value="Ribosomal_S3Ae"/>
    <property type="match status" value="1"/>
</dbReference>
<proteinExistence type="inferred from homology"/>
<reference key="1">
    <citation type="journal article" date="2001" name="DNA Res.">
        <title>Complete genome sequence of an aerobic thermoacidophilic Crenarchaeon, Sulfolobus tokodaii strain7.</title>
        <authorList>
            <person name="Kawarabayasi Y."/>
            <person name="Hino Y."/>
            <person name="Horikawa H."/>
            <person name="Jin-no K."/>
            <person name="Takahashi M."/>
            <person name="Sekine M."/>
            <person name="Baba S."/>
            <person name="Ankai A."/>
            <person name="Kosugi H."/>
            <person name="Hosoyama A."/>
            <person name="Fukui S."/>
            <person name="Nagai Y."/>
            <person name="Nishijima K."/>
            <person name="Otsuka R."/>
            <person name="Nakazawa H."/>
            <person name="Takamiya M."/>
            <person name="Kato Y."/>
            <person name="Yoshizawa T."/>
            <person name="Tanaka T."/>
            <person name="Kudoh Y."/>
            <person name="Yamazaki J."/>
            <person name="Kushida N."/>
            <person name="Oguchi A."/>
            <person name="Aoki K."/>
            <person name="Masuda S."/>
            <person name="Yanagii M."/>
            <person name="Nishimura M."/>
            <person name="Yamagishi A."/>
            <person name="Oshima T."/>
            <person name="Kikuchi H."/>
        </authorList>
    </citation>
    <scope>NUCLEOTIDE SEQUENCE [LARGE SCALE GENOMIC DNA]</scope>
    <source>
        <strain>DSM 16993 / JCM 10545 / NBRC 100140 / 7</strain>
    </source>
</reference>
<comment type="similarity">
    <text evidence="1">Belongs to the eukaryotic ribosomal protein eS1 family.</text>
</comment>
<gene>
    <name evidence="1" type="primary">rps3ae</name>
    <name type="ordered locus">STK_04530</name>
</gene>
<name>RS3A_SULTO</name>
<feature type="chain" id="PRO_0000153562" description="Small ribosomal subunit protein eS1">
    <location>
        <begin position="1"/>
        <end position="193"/>
    </location>
</feature>
<keyword id="KW-1185">Reference proteome</keyword>
<keyword id="KW-0687">Ribonucleoprotein</keyword>
<keyword id="KW-0689">Ribosomal protein</keyword>
<accession>Q975F8</accession>